<keyword id="KW-0007">Acetylation</keyword>
<keyword id="KW-0560">Oxidoreductase</keyword>
<keyword id="KW-0597">Phosphoprotein</keyword>
<keyword id="KW-1185">Reference proteome</keyword>
<proteinExistence type="evidence at transcript level"/>
<sequence length="429" mass="47320">MATQQRPFHLVVFGASGFTGQFVTEEVAREQVSPERTSHLPWAVAGRSREKLLRVLERAAMKLGRPTLSSEVGIIICDITNPASLDEMAKQATVVLNCVGPYRFYGEPVIKACIENGTSCIDISGEPQFLELMYWKYHEKAAEKGVYIIGSSGFDSIPADLGVIYTRNKMNGTLTAVESFLTISSGPEGLCVHDGTWKSAVYGFGDKSNLKKLRNESDMKPVPIVGPKLKRRWPISYCRELNSYSIPFLGADVSVVKRTQRYLHENLEQSPVQYAAYINVGGITSVIKLMFAGLFFLFFVRFGIGRQLLIKFTWLFSFGYFSKQGPTQKQIDASSFTMTFFGQGFSQGVSPVKNKPNIRICTQVKGPEAGYVSTSIAMVQAAMILLNDASDLPKAGGVFTPGAAFSRTKLIDRLNEHGIEFSVISSTEV</sequence>
<gene>
    <name type="primary">SCCPDH</name>
</gene>
<evidence type="ECO:0000250" key="1">
    <source>
        <dbReference type="UniProtKB" id="Q8NBX0"/>
    </source>
</evidence>
<evidence type="ECO:0000305" key="2"/>
<dbReference type="EC" id="1.-.-.-"/>
<dbReference type="EMBL" id="BC102545">
    <property type="protein sequence ID" value="AAI02546.1"/>
    <property type="molecule type" value="mRNA"/>
</dbReference>
<dbReference type="RefSeq" id="NP_001029460.1">
    <property type="nucleotide sequence ID" value="NM_001034288.2"/>
</dbReference>
<dbReference type="SMR" id="Q3T067"/>
<dbReference type="FunCoup" id="Q3T067">
    <property type="interactions" value="911"/>
</dbReference>
<dbReference type="STRING" id="9913.ENSBTAP00000004949"/>
<dbReference type="SwissPalm" id="Q3T067"/>
<dbReference type="PaxDb" id="9913-ENSBTAP00000004949"/>
<dbReference type="GeneID" id="507289"/>
<dbReference type="KEGG" id="bta:507289"/>
<dbReference type="CTD" id="51097"/>
<dbReference type="eggNOG" id="KOG2733">
    <property type="taxonomic scope" value="Eukaryota"/>
</dbReference>
<dbReference type="InParanoid" id="Q3T067"/>
<dbReference type="OrthoDB" id="10268090at2759"/>
<dbReference type="Proteomes" id="UP000009136">
    <property type="component" value="Unplaced"/>
</dbReference>
<dbReference type="GO" id="GO:0005811">
    <property type="term" value="C:lipid droplet"/>
    <property type="evidence" value="ECO:0000318"/>
    <property type="project" value="GO_Central"/>
</dbReference>
<dbReference type="GO" id="GO:0016020">
    <property type="term" value="C:membrane"/>
    <property type="evidence" value="ECO:0007669"/>
    <property type="project" value="GOC"/>
</dbReference>
<dbReference type="GO" id="GO:0016491">
    <property type="term" value="F:oxidoreductase activity"/>
    <property type="evidence" value="ECO:0007669"/>
    <property type="project" value="UniProtKB-KW"/>
</dbReference>
<dbReference type="GO" id="GO:0009247">
    <property type="term" value="P:glycolipid biosynthetic process"/>
    <property type="evidence" value="ECO:0000318"/>
    <property type="project" value="GO_Central"/>
</dbReference>
<dbReference type="FunFam" id="3.40.50.720:FF:000178">
    <property type="entry name" value="Saccharopine dehydrogenase-like oxidoreductase"/>
    <property type="match status" value="1"/>
</dbReference>
<dbReference type="Gene3D" id="3.40.50.720">
    <property type="entry name" value="NAD(P)-binding Rossmann-like Domain"/>
    <property type="match status" value="1"/>
</dbReference>
<dbReference type="InterPro" id="IPR036291">
    <property type="entry name" value="NAD(P)-bd_dom_sf"/>
</dbReference>
<dbReference type="InterPro" id="IPR051276">
    <property type="entry name" value="Saccharopine_DH-like_oxidrdct"/>
</dbReference>
<dbReference type="InterPro" id="IPR005097">
    <property type="entry name" value="Sacchrp_dh_NADP-bd"/>
</dbReference>
<dbReference type="PANTHER" id="PTHR12286">
    <property type="entry name" value="SACCHAROPINE DEHYDROGENASE-LIKE OXIDOREDUCTASE"/>
    <property type="match status" value="1"/>
</dbReference>
<dbReference type="PANTHER" id="PTHR12286:SF5">
    <property type="entry name" value="SACCHAROPINE DEHYDROGENASE-LIKE OXIDOREDUCTASE"/>
    <property type="match status" value="1"/>
</dbReference>
<dbReference type="Pfam" id="PF03435">
    <property type="entry name" value="Sacchrp_dh_NADP"/>
    <property type="match status" value="1"/>
</dbReference>
<dbReference type="SUPFAM" id="SSF51735">
    <property type="entry name" value="NAD(P)-binding Rossmann-fold domains"/>
    <property type="match status" value="1"/>
</dbReference>
<protein>
    <recommendedName>
        <fullName>Saccharopine dehydrogenase-like oxidoreductase</fullName>
        <ecNumber>1.-.-.-</ecNumber>
    </recommendedName>
</protein>
<accession>Q3T067</accession>
<reference key="1">
    <citation type="submission" date="2005-08" db="EMBL/GenBank/DDBJ databases">
        <authorList>
            <consortium name="NIH - Mammalian Gene Collection (MGC) project"/>
        </authorList>
    </citation>
    <scope>NUCLEOTIDE SEQUENCE [LARGE SCALE MRNA]</scope>
    <source>
        <strain>Crossbred X Angus</strain>
        <tissue>Liver</tissue>
    </source>
</reference>
<name>SCPDL_BOVIN</name>
<organism>
    <name type="scientific">Bos taurus</name>
    <name type="common">Bovine</name>
    <dbReference type="NCBI Taxonomy" id="9913"/>
    <lineage>
        <taxon>Eukaryota</taxon>
        <taxon>Metazoa</taxon>
        <taxon>Chordata</taxon>
        <taxon>Craniata</taxon>
        <taxon>Vertebrata</taxon>
        <taxon>Euteleostomi</taxon>
        <taxon>Mammalia</taxon>
        <taxon>Eutheria</taxon>
        <taxon>Laurasiatheria</taxon>
        <taxon>Artiodactyla</taxon>
        <taxon>Ruminantia</taxon>
        <taxon>Pecora</taxon>
        <taxon>Bovidae</taxon>
        <taxon>Bovinae</taxon>
        <taxon>Bos</taxon>
    </lineage>
</organism>
<comment type="similarity">
    <text evidence="2">Belongs to the saccharopine dehydrogenase family.</text>
</comment>
<feature type="initiator methionine" description="Removed" evidence="1">
    <location>
        <position position="1"/>
    </location>
</feature>
<feature type="chain" id="PRO_0000290019" description="Saccharopine dehydrogenase-like oxidoreductase">
    <location>
        <begin position="2"/>
        <end position="429"/>
    </location>
</feature>
<feature type="modified residue" description="N-acetylalanine" evidence="1">
    <location>
        <position position="2"/>
    </location>
</feature>
<feature type="modified residue" description="Phosphoserine" evidence="1">
    <location>
        <position position="217"/>
    </location>
</feature>